<evidence type="ECO:0000255" key="1">
    <source>
        <dbReference type="HAMAP-Rule" id="MF_00531"/>
    </source>
</evidence>
<evidence type="ECO:0000305" key="2"/>
<reference key="1">
    <citation type="journal article" date="2001" name="Science">
        <title>Comparative genomics of Listeria species.</title>
        <authorList>
            <person name="Glaser P."/>
            <person name="Frangeul L."/>
            <person name="Buchrieser C."/>
            <person name="Rusniok C."/>
            <person name="Amend A."/>
            <person name="Baquero F."/>
            <person name="Berche P."/>
            <person name="Bloecker H."/>
            <person name="Brandt P."/>
            <person name="Chakraborty T."/>
            <person name="Charbit A."/>
            <person name="Chetouani F."/>
            <person name="Couve E."/>
            <person name="de Daruvar A."/>
            <person name="Dehoux P."/>
            <person name="Domann E."/>
            <person name="Dominguez-Bernal G."/>
            <person name="Duchaud E."/>
            <person name="Durant L."/>
            <person name="Dussurget O."/>
            <person name="Entian K.-D."/>
            <person name="Fsihi H."/>
            <person name="Garcia-del Portillo F."/>
            <person name="Garrido P."/>
            <person name="Gautier L."/>
            <person name="Goebel W."/>
            <person name="Gomez-Lopez N."/>
            <person name="Hain T."/>
            <person name="Hauf J."/>
            <person name="Jackson D."/>
            <person name="Jones L.-M."/>
            <person name="Kaerst U."/>
            <person name="Kreft J."/>
            <person name="Kuhn M."/>
            <person name="Kunst F."/>
            <person name="Kurapkat G."/>
            <person name="Madueno E."/>
            <person name="Maitournam A."/>
            <person name="Mata Vicente J."/>
            <person name="Ng E."/>
            <person name="Nedjari H."/>
            <person name="Nordsiek G."/>
            <person name="Novella S."/>
            <person name="de Pablos B."/>
            <person name="Perez-Diaz J.-C."/>
            <person name="Purcell R."/>
            <person name="Remmel B."/>
            <person name="Rose M."/>
            <person name="Schlueter T."/>
            <person name="Simoes N."/>
            <person name="Tierrez A."/>
            <person name="Vazquez-Boland J.-A."/>
            <person name="Voss H."/>
            <person name="Wehland J."/>
            <person name="Cossart P."/>
        </authorList>
    </citation>
    <scope>NUCLEOTIDE SEQUENCE [LARGE SCALE GENOMIC DNA]</scope>
    <source>
        <strain>ATCC BAA-679 / EGD-e</strain>
    </source>
</reference>
<accession>P66484</accession>
<accession>Q8Y442</accession>
<accession>Q927L1</accession>
<keyword id="KW-0002">3D-structure</keyword>
<keyword id="KW-1185">Reference proteome</keyword>
<keyword id="KW-0687">Ribonucleoprotein</keyword>
<keyword id="KW-0689">Ribosomal protein</keyword>
<keyword id="KW-0694">RNA-binding</keyword>
<keyword id="KW-0699">rRNA-binding</keyword>
<comment type="function">
    <text evidence="1">Protein S19 forms a complex with S13 that binds strongly to the 16S ribosomal RNA.</text>
</comment>
<comment type="similarity">
    <text evidence="1">Belongs to the universal ribosomal protein uS19 family.</text>
</comment>
<name>RS19_LISMO</name>
<gene>
    <name evidence="1" type="primary">rpsS</name>
    <name type="ordered locus">lmo2628</name>
</gene>
<feature type="chain" id="PRO_0000129845" description="Small ribosomal subunit protein uS19">
    <location>
        <begin position="1"/>
        <end position="92"/>
    </location>
</feature>
<dbReference type="EMBL" id="AL591983">
    <property type="protein sequence ID" value="CAD00706.1"/>
    <property type="molecule type" value="Genomic_DNA"/>
</dbReference>
<dbReference type="PIR" id="AD1403">
    <property type="entry name" value="AD1403"/>
</dbReference>
<dbReference type="RefSeq" id="NP_466151.1">
    <property type="nucleotide sequence ID" value="NC_003210.1"/>
</dbReference>
<dbReference type="RefSeq" id="WP_003720946.1">
    <property type="nucleotide sequence ID" value="NZ_CP149495.1"/>
</dbReference>
<dbReference type="PDB" id="7NHN">
    <property type="method" value="EM"/>
    <property type="resolution" value="2.90 A"/>
    <property type="chains" value="t=1-92"/>
</dbReference>
<dbReference type="PDBsum" id="7NHN"/>
<dbReference type="EMDB" id="EMD-12334"/>
<dbReference type="SMR" id="P66484"/>
<dbReference type="STRING" id="169963.gene:17595346"/>
<dbReference type="PaxDb" id="169963-lmo2628"/>
<dbReference type="EnsemblBacteria" id="CAD00706">
    <property type="protein sequence ID" value="CAD00706"/>
    <property type="gene ID" value="CAD00706"/>
</dbReference>
<dbReference type="GeneID" id="93236050"/>
<dbReference type="GeneID" id="984385"/>
<dbReference type="KEGG" id="lmo:lmo2628"/>
<dbReference type="PATRIC" id="fig|169963.11.peg.2692"/>
<dbReference type="eggNOG" id="COG0185">
    <property type="taxonomic scope" value="Bacteria"/>
</dbReference>
<dbReference type="HOGENOM" id="CLU_144911_0_1_9"/>
<dbReference type="OrthoDB" id="9797833at2"/>
<dbReference type="PhylomeDB" id="P66484"/>
<dbReference type="BioCyc" id="LMON169963:LMO2628-MONOMER"/>
<dbReference type="Proteomes" id="UP000000817">
    <property type="component" value="Chromosome"/>
</dbReference>
<dbReference type="GO" id="GO:0005737">
    <property type="term" value="C:cytoplasm"/>
    <property type="evidence" value="ECO:0007669"/>
    <property type="project" value="UniProtKB-ARBA"/>
</dbReference>
<dbReference type="GO" id="GO:0015935">
    <property type="term" value="C:small ribosomal subunit"/>
    <property type="evidence" value="ECO:0007669"/>
    <property type="project" value="InterPro"/>
</dbReference>
<dbReference type="GO" id="GO:0019843">
    <property type="term" value="F:rRNA binding"/>
    <property type="evidence" value="ECO:0007669"/>
    <property type="project" value="UniProtKB-UniRule"/>
</dbReference>
<dbReference type="GO" id="GO:0003735">
    <property type="term" value="F:structural constituent of ribosome"/>
    <property type="evidence" value="ECO:0000318"/>
    <property type="project" value="GO_Central"/>
</dbReference>
<dbReference type="GO" id="GO:0000028">
    <property type="term" value="P:ribosomal small subunit assembly"/>
    <property type="evidence" value="ECO:0000318"/>
    <property type="project" value="GO_Central"/>
</dbReference>
<dbReference type="GO" id="GO:0006412">
    <property type="term" value="P:translation"/>
    <property type="evidence" value="ECO:0007669"/>
    <property type="project" value="UniProtKB-UniRule"/>
</dbReference>
<dbReference type="FunFam" id="3.30.860.10:FF:000001">
    <property type="entry name" value="30S ribosomal protein S19"/>
    <property type="match status" value="1"/>
</dbReference>
<dbReference type="Gene3D" id="3.30.860.10">
    <property type="entry name" value="30s Ribosomal Protein S19, Chain A"/>
    <property type="match status" value="1"/>
</dbReference>
<dbReference type="HAMAP" id="MF_00531">
    <property type="entry name" value="Ribosomal_uS19"/>
    <property type="match status" value="1"/>
</dbReference>
<dbReference type="InterPro" id="IPR002222">
    <property type="entry name" value="Ribosomal_uS19"/>
</dbReference>
<dbReference type="InterPro" id="IPR005732">
    <property type="entry name" value="Ribosomal_uS19_bac-type"/>
</dbReference>
<dbReference type="InterPro" id="IPR020934">
    <property type="entry name" value="Ribosomal_uS19_CS"/>
</dbReference>
<dbReference type="InterPro" id="IPR023575">
    <property type="entry name" value="Ribosomal_uS19_SF"/>
</dbReference>
<dbReference type="NCBIfam" id="TIGR01050">
    <property type="entry name" value="rpsS_bact"/>
    <property type="match status" value="1"/>
</dbReference>
<dbReference type="PANTHER" id="PTHR11880">
    <property type="entry name" value="RIBOSOMAL PROTEIN S19P FAMILY MEMBER"/>
    <property type="match status" value="1"/>
</dbReference>
<dbReference type="PANTHER" id="PTHR11880:SF8">
    <property type="entry name" value="SMALL RIBOSOMAL SUBUNIT PROTEIN US19M"/>
    <property type="match status" value="1"/>
</dbReference>
<dbReference type="Pfam" id="PF00203">
    <property type="entry name" value="Ribosomal_S19"/>
    <property type="match status" value="1"/>
</dbReference>
<dbReference type="PIRSF" id="PIRSF002144">
    <property type="entry name" value="Ribosomal_S19"/>
    <property type="match status" value="1"/>
</dbReference>
<dbReference type="PRINTS" id="PR00975">
    <property type="entry name" value="RIBOSOMALS19"/>
</dbReference>
<dbReference type="SUPFAM" id="SSF54570">
    <property type="entry name" value="Ribosomal protein S19"/>
    <property type="match status" value="1"/>
</dbReference>
<dbReference type="PROSITE" id="PS00323">
    <property type="entry name" value="RIBOSOMAL_S19"/>
    <property type="match status" value="1"/>
</dbReference>
<proteinExistence type="evidence at protein level"/>
<organism>
    <name type="scientific">Listeria monocytogenes serovar 1/2a (strain ATCC BAA-679 / EGD-e)</name>
    <dbReference type="NCBI Taxonomy" id="169963"/>
    <lineage>
        <taxon>Bacteria</taxon>
        <taxon>Bacillati</taxon>
        <taxon>Bacillota</taxon>
        <taxon>Bacilli</taxon>
        <taxon>Bacillales</taxon>
        <taxon>Listeriaceae</taxon>
        <taxon>Listeria</taxon>
    </lineage>
</organism>
<protein>
    <recommendedName>
        <fullName evidence="1">Small ribosomal subunit protein uS19</fullName>
    </recommendedName>
    <alternativeName>
        <fullName evidence="2">30S ribosomal protein S19</fullName>
    </alternativeName>
</protein>
<sequence length="92" mass="10475">MGRSLKKGPFVDDHLMKKVEAAAESEKKQVIKTWSRRSTIFPTFVGQTIAVYDGRKHVPVYVQEDMVGHKLGEFAPTRTYRGHAGDDKKTKR</sequence>